<comment type="alternative products">
    <event type="alternative splicing"/>
    <isoform>
        <id>Q0P5X1-1</id>
        <name>1</name>
        <sequence type="displayed"/>
    </isoform>
    <isoform>
        <id>Q0P5X1-2</id>
        <name>2</name>
        <sequence type="described" ref="VSP_040541 VSP_040542"/>
    </isoform>
</comment>
<comment type="sequence caution" evidence="4">
    <conflict type="frameshift">
        <sequence resource="EMBL-CDS" id="BAE34547"/>
    </conflict>
</comment>
<dbReference type="EMBL" id="AC122850">
    <property type="status" value="NOT_ANNOTATED_CDS"/>
    <property type="molecule type" value="Genomic_DNA"/>
</dbReference>
<dbReference type="EMBL" id="AC162918">
    <property type="status" value="NOT_ANNOTATED_CDS"/>
    <property type="molecule type" value="Genomic_DNA"/>
</dbReference>
<dbReference type="EMBL" id="BC051400">
    <property type="protein sequence ID" value="AAH51400.1"/>
    <property type="molecule type" value="mRNA"/>
</dbReference>
<dbReference type="EMBL" id="AK015687">
    <property type="protein sequence ID" value="BAB29931.1"/>
    <property type="molecule type" value="mRNA"/>
</dbReference>
<dbReference type="EMBL" id="AK158531">
    <property type="protein sequence ID" value="BAE34547.1"/>
    <property type="status" value="ALT_FRAME"/>
    <property type="molecule type" value="mRNA"/>
</dbReference>
<dbReference type="CCDS" id="CCDS48686.1">
    <molecule id="Q0P5X1-2"/>
</dbReference>
<dbReference type="CCDS" id="CCDS48687.1">
    <molecule id="Q0P5X1-1"/>
</dbReference>
<dbReference type="RefSeq" id="NP_001157031.1">
    <molecule id="Q0P5X1-1"/>
    <property type="nucleotide sequence ID" value="NM_001163559.2"/>
</dbReference>
<dbReference type="RefSeq" id="NP_001347987.1">
    <molecule id="Q0P5X1-2"/>
    <property type="nucleotide sequence ID" value="NM_001361058.1"/>
</dbReference>
<dbReference type="RefSeq" id="NP_083410.1">
    <molecule id="Q0P5X1-2"/>
    <property type="nucleotide sequence ID" value="NM_029134.2"/>
</dbReference>
<dbReference type="RefSeq" id="XP_006514322.1">
    <molecule id="Q0P5X1-1"/>
    <property type="nucleotide sequence ID" value="XM_006514259.3"/>
</dbReference>
<dbReference type="RefSeq" id="XP_006514325.1">
    <property type="nucleotide sequence ID" value="XM_006514262.2"/>
</dbReference>
<dbReference type="SMR" id="Q0P5X1"/>
<dbReference type="BioGRID" id="217124">
    <property type="interactions" value="2"/>
</dbReference>
<dbReference type="FunCoup" id="Q0P5X1">
    <property type="interactions" value="8"/>
</dbReference>
<dbReference type="STRING" id="10090.ENSMUSP00000131419"/>
<dbReference type="GlyGen" id="Q0P5X1">
    <property type="glycosylation" value="1 site, 1 O-linked glycan (1 site)"/>
</dbReference>
<dbReference type="iPTMnet" id="Q0P5X1"/>
<dbReference type="PhosphoSitePlus" id="Q0P5X1"/>
<dbReference type="jPOST" id="Q0P5X1"/>
<dbReference type="PaxDb" id="10090-ENSMUSP00000020043"/>
<dbReference type="PeptideAtlas" id="Q0P5X1"/>
<dbReference type="ProteomicsDB" id="292035">
    <molecule id="Q0P5X1-1"/>
</dbReference>
<dbReference type="ProteomicsDB" id="292036">
    <molecule id="Q0P5X1-2"/>
</dbReference>
<dbReference type="Antibodypedia" id="52101">
    <property type="antibodies" value="17 antibodies from 8 providers"/>
</dbReference>
<dbReference type="Ensembl" id="ENSMUST00000020043.12">
    <molecule id="Q0P5X1-2"/>
    <property type="protein sequence ID" value="ENSMUSP00000020043.6"/>
    <property type="gene ID" value="ENSMUSG00000019892.14"/>
</dbReference>
<dbReference type="Ensembl" id="ENSMUST00000166240.8">
    <molecule id="Q0P5X1-1"/>
    <property type="protein sequence ID" value="ENSMUSP00000131419.2"/>
    <property type="gene ID" value="ENSMUSG00000019892.14"/>
</dbReference>
<dbReference type="GeneID" id="74978"/>
<dbReference type="KEGG" id="mmu:74978"/>
<dbReference type="UCSC" id="uc007gyi.1">
    <molecule id="Q0P5X1-2"/>
    <property type="organism name" value="mouse"/>
</dbReference>
<dbReference type="UCSC" id="uc011xmu.1">
    <molecule id="Q0P5X1-1"/>
    <property type="organism name" value="mouse"/>
</dbReference>
<dbReference type="AGR" id="MGI:1922228"/>
<dbReference type="CTD" id="84125"/>
<dbReference type="MGI" id="MGI:1922228">
    <property type="gene designation" value="Lrriq1"/>
</dbReference>
<dbReference type="VEuPathDB" id="HostDB:ENSMUSG00000019892"/>
<dbReference type="eggNOG" id="KOG0531">
    <property type="taxonomic scope" value="Eukaryota"/>
</dbReference>
<dbReference type="GeneTree" id="ENSGT00940000162858"/>
<dbReference type="HOGENOM" id="CLU_002837_0_0_1"/>
<dbReference type="InParanoid" id="Q0P5X1"/>
<dbReference type="OMA" id="KHRYAHE"/>
<dbReference type="OrthoDB" id="266138at2759"/>
<dbReference type="PhylomeDB" id="Q0P5X1"/>
<dbReference type="TreeFam" id="TF333460"/>
<dbReference type="BioGRID-ORCS" id="74978">
    <property type="hits" value="8 hits in 77 CRISPR screens"/>
</dbReference>
<dbReference type="ChiTaRS" id="Lrriq1">
    <property type="organism name" value="mouse"/>
</dbReference>
<dbReference type="PRO" id="PR:Q0P5X1"/>
<dbReference type="Proteomes" id="UP000000589">
    <property type="component" value="Chromosome 10"/>
</dbReference>
<dbReference type="RNAct" id="Q0P5X1">
    <property type="molecule type" value="protein"/>
</dbReference>
<dbReference type="Bgee" id="ENSMUSG00000019892">
    <property type="expression patterns" value="Expressed in spermatid and 43 other cell types or tissues"/>
</dbReference>
<dbReference type="ExpressionAtlas" id="Q0P5X1">
    <property type="expression patterns" value="baseline and differential"/>
</dbReference>
<dbReference type="GO" id="GO:0006915">
    <property type="term" value="P:apoptotic process"/>
    <property type="evidence" value="ECO:0000315"/>
    <property type="project" value="MGI"/>
</dbReference>
<dbReference type="GO" id="GO:0035234">
    <property type="term" value="P:ectopic germ cell programmed cell death"/>
    <property type="evidence" value="ECO:0000315"/>
    <property type="project" value="MGI"/>
</dbReference>
<dbReference type="GO" id="GO:0010467">
    <property type="term" value="P:gene expression"/>
    <property type="evidence" value="ECO:0000315"/>
    <property type="project" value="MGI"/>
</dbReference>
<dbReference type="GO" id="GO:0007338">
    <property type="term" value="P:single fertilization"/>
    <property type="evidence" value="ECO:0000315"/>
    <property type="project" value="MGI"/>
</dbReference>
<dbReference type="CDD" id="cd23767">
    <property type="entry name" value="IQCD"/>
    <property type="match status" value="1"/>
</dbReference>
<dbReference type="FunFam" id="3.80.10.10:FF:001142">
    <property type="entry name" value="Leucine-rich repeats and IQ motif containing 1"/>
    <property type="match status" value="1"/>
</dbReference>
<dbReference type="FunFam" id="3.80.10.10:FF:001376">
    <property type="entry name" value="Leucine-rich repeats and IQ motif-containing 1"/>
    <property type="match status" value="1"/>
</dbReference>
<dbReference type="Gene3D" id="1.20.5.190">
    <property type="match status" value="1"/>
</dbReference>
<dbReference type="Gene3D" id="3.80.10.10">
    <property type="entry name" value="Ribonuclease Inhibitor"/>
    <property type="match status" value="2"/>
</dbReference>
<dbReference type="InterPro" id="IPR000048">
    <property type="entry name" value="IQ_motif_EF-hand-BS"/>
</dbReference>
<dbReference type="InterPro" id="IPR001611">
    <property type="entry name" value="Leu-rich_rpt"/>
</dbReference>
<dbReference type="InterPro" id="IPR003591">
    <property type="entry name" value="Leu-rich_rpt_typical-subtyp"/>
</dbReference>
<dbReference type="InterPro" id="IPR032675">
    <property type="entry name" value="LRR_dom_sf"/>
</dbReference>
<dbReference type="InterPro" id="IPR050836">
    <property type="entry name" value="SDS22/Internalin_LRR"/>
</dbReference>
<dbReference type="PANTHER" id="PTHR46652:SF7">
    <property type="entry name" value="LEUCINE-RICH REPEAT AND IQ DOMAIN-CONTAINING PROTEIN 1"/>
    <property type="match status" value="1"/>
</dbReference>
<dbReference type="PANTHER" id="PTHR46652">
    <property type="entry name" value="LEUCINE-RICH REPEAT AND IQ DOMAIN-CONTAINING PROTEIN 1-RELATED"/>
    <property type="match status" value="1"/>
</dbReference>
<dbReference type="Pfam" id="PF00612">
    <property type="entry name" value="IQ"/>
    <property type="match status" value="2"/>
</dbReference>
<dbReference type="Pfam" id="PF13855">
    <property type="entry name" value="LRR_8"/>
    <property type="match status" value="2"/>
</dbReference>
<dbReference type="SMART" id="SM00015">
    <property type="entry name" value="IQ"/>
    <property type="match status" value="3"/>
</dbReference>
<dbReference type="SMART" id="SM00365">
    <property type="entry name" value="LRR_SD22"/>
    <property type="match status" value="5"/>
</dbReference>
<dbReference type="SMART" id="SM00369">
    <property type="entry name" value="LRR_TYP"/>
    <property type="match status" value="4"/>
</dbReference>
<dbReference type="SUPFAM" id="SSF52058">
    <property type="entry name" value="L domain-like"/>
    <property type="match status" value="1"/>
</dbReference>
<dbReference type="PROSITE" id="PS50096">
    <property type="entry name" value="IQ"/>
    <property type="match status" value="3"/>
</dbReference>
<dbReference type="PROSITE" id="PS51450">
    <property type="entry name" value="LRR"/>
    <property type="match status" value="10"/>
</dbReference>
<gene>
    <name type="primary">Lrriq1</name>
</gene>
<protein>
    <recommendedName>
        <fullName>Leucine-rich repeat- and IQ domain-containing protein 1</fullName>
    </recommendedName>
</protein>
<evidence type="ECO:0000255" key="1">
    <source>
        <dbReference type="PROSITE-ProRule" id="PRU00116"/>
    </source>
</evidence>
<evidence type="ECO:0000256" key="2">
    <source>
        <dbReference type="SAM" id="MobiDB-lite"/>
    </source>
</evidence>
<evidence type="ECO:0000303" key="3">
    <source>
    </source>
</evidence>
<evidence type="ECO:0000305" key="4"/>
<feature type="chain" id="PRO_0000313626" description="Leucine-rich repeat- and IQ domain-containing protein 1">
    <location>
        <begin position="1"/>
        <end position="1673"/>
    </location>
</feature>
<feature type="repeat" description="LRR 1">
    <location>
        <begin position="34"/>
        <end position="59"/>
    </location>
</feature>
<feature type="repeat" description="LRR 2">
    <location>
        <begin position="216"/>
        <end position="239"/>
    </location>
</feature>
<feature type="domain" description="IQ 1" evidence="1">
    <location>
        <begin position="291"/>
        <end position="320"/>
    </location>
</feature>
<feature type="repeat" description="LRR 3">
    <location>
        <begin position="491"/>
        <end position="516"/>
    </location>
</feature>
<feature type="repeat" description="LRR 4">
    <location>
        <begin position="641"/>
        <end position="665"/>
    </location>
</feature>
<feature type="repeat" description="LRR 5">
    <location>
        <begin position="830"/>
        <end position="852"/>
    </location>
</feature>
<feature type="repeat" description="LRR 6">
    <location>
        <begin position="853"/>
        <end position="873"/>
    </location>
</feature>
<feature type="repeat" description="LRR 7">
    <location>
        <begin position="874"/>
        <end position="894"/>
    </location>
</feature>
<feature type="repeat" description="LRR 8">
    <location>
        <begin position="895"/>
        <end position="919"/>
    </location>
</feature>
<feature type="repeat" description="LRR 9">
    <location>
        <begin position="921"/>
        <end position="939"/>
    </location>
</feature>
<feature type="repeat" description="LRR 10">
    <location>
        <begin position="940"/>
        <end position="961"/>
    </location>
</feature>
<feature type="repeat" description="LRR 11">
    <location>
        <begin position="962"/>
        <end position="983"/>
    </location>
</feature>
<feature type="repeat" description="LRR 12">
    <location>
        <begin position="984"/>
        <end position="1005"/>
    </location>
</feature>
<feature type="repeat" description="LRR 13">
    <location>
        <begin position="1007"/>
        <end position="1029"/>
    </location>
</feature>
<feature type="repeat" description="LRR 14">
    <location>
        <begin position="1030"/>
        <end position="1054"/>
    </location>
</feature>
<feature type="repeat" description="LRR 15">
    <location>
        <begin position="1067"/>
        <end position="1090"/>
    </location>
</feature>
<feature type="domain" description="IQ 2" evidence="1">
    <location>
        <begin position="1280"/>
        <end position="1309"/>
    </location>
</feature>
<feature type="domain" description="IQ 3" evidence="1">
    <location>
        <begin position="1340"/>
        <end position="1369"/>
    </location>
</feature>
<feature type="repeat" description="LRR 16">
    <location>
        <begin position="1378"/>
        <end position="1405"/>
    </location>
</feature>
<feature type="region of interest" description="Disordered" evidence="2">
    <location>
        <begin position="22"/>
        <end position="48"/>
    </location>
</feature>
<feature type="region of interest" description="Disordered" evidence="2">
    <location>
        <begin position="189"/>
        <end position="208"/>
    </location>
</feature>
<feature type="region of interest" description="Disordered" evidence="2">
    <location>
        <begin position="324"/>
        <end position="374"/>
    </location>
</feature>
<feature type="region of interest" description="Disordered" evidence="2">
    <location>
        <begin position="544"/>
        <end position="658"/>
    </location>
</feature>
<feature type="region of interest" description="Disordered" evidence="2">
    <location>
        <begin position="679"/>
        <end position="702"/>
    </location>
</feature>
<feature type="region of interest" description="Disordered" evidence="2">
    <location>
        <begin position="1163"/>
        <end position="1230"/>
    </location>
</feature>
<feature type="region of interest" description="Disordered" evidence="2">
    <location>
        <begin position="1308"/>
        <end position="1330"/>
    </location>
</feature>
<feature type="compositionally biased region" description="Basic and acidic residues" evidence="2">
    <location>
        <begin position="326"/>
        <end position="374"/>
    </location>
</feature>
<feature type="compositionally biased region" description="Basic and acidic residues" evidence="2">
    <location>
        <begin position="549"/>
        <end position="567"/>
    </location>
</feature>
<feature type="compositionally biased region" description="Basic and acidic residues" evidence="2">
    <location>
        <begin position="588"/>
        <end position="602"/>
    </location>
</feature>
<feature type="compositionally biased region" description="Polar residues" evidence="2">
    <location>
        <begin position="603"/>
        <end position="629"/>
    </location>
</feature>
<feature type="compositionally biased region" description="Basic and acidic residues" evidence="2">
    <location>
        <begin position="647"/>
        <end position="656"/>
    </location>
</feature>
<feature type="compositionally biased region" description="Polar residues" evidence="2">
    <location>
        <begin position="1168"/>
        <end position="1226"/>
    </location>
</feature>
<feature type="compositionally biased region" description="Polar residues" evidence="2">
    <location>
        <begin position="1308"/>
        <end position="1325"/>
    </location>
</feature>
<feature type="splice variant" id="VSP_040541" description="In isoform 2." evidence="3">
    <original>PVI</original>
    <variation>FII</variation>
    <location>
        <begin position="812"/>
        <end position="814"/>
    </location>
</feature>
<feature type="splice variant" id="VSP_040542" description="In isoform 2." evidence="3">
    <location>
        <begin position="815"/>
        <end position="1673"/>
    </location>
</feature>
<feature type="sequence conflict" description="In Ref. 3; BAB29931." evidence="4" ref="3">
    <original>A</original>
    <variation>T</variation>
    <location>
        <position position="295"/>
    </location>
</feature>
<feature type="sequence conflict" description="In Ref. 3; BAE34547." evidence="4" ref="3">
    <original>E</original>
    <variation>G</variation>
    <location>
        <position position="489"/>
    </location>
</feature>
<organism>
    <name type="scientific">Mus musculus</name>
    <name type="common">Mouse</name>
    <dbReference type="NCBI Taxonomy" id="10090"/>
    <lineage>
        <taxon>Eukaryota</taxon>
        <taxon>Metazoa</taxon>
        <taxon>Chordata</taxon>
        <taxon>Craniata</taxon>
        <taxon>Vertebrata</taxon>
        <taxon>Euteleostomi</taxon>
        <taxon>Mammalia</taxon>
        <taxon>Eutheria</taxon>
        <taxon>Euarchontoglires</taxon>
        <taxon>Glires</taxon>
        <taxon>Rodentia</taxon>
        <taxon>Myomorpha</taxon>
        <taxon>Muroidea</taxon>
        <taxon>Muridae</taxon>
        <taxon>Murinae</taxon>
        <taxon>Mus</taxon>
        <taxon>Mus</taxon>
    </lineage>
</organism>
<proteinExistence type="evidence at transcript level"/>
<name>LRIQ1_MOUSE</name>
<sequence>MEDSDDSEAKLREEIEAELDKISISSLENDEVENDSVSDTQSDSSDTDLLELPESVLHYINVIKNKSKTAEELILQDVEDTDIFSDYKKGCNHGTVTDSHMHLRTGSLPESKANAEQLMKILSVIEKEEFMRSLAPSARCVSVREIITPDTPMDEYILPDEADLSFGYFEVEERCRKSFEAWQDKQQELEEKDKETLEAQNEREKRTFQEEDEKRQCWMRQFEVEKKHLEDLQKQDQDKMNDELHKEEKIWKEKYRQHEEHIRNLHLKMEEERTRLSELQEKEKARLFKLRYDAAVKIQATYRASVTYRKYSPIIKEQMEKKRRRAQELKEKEAKIRQKEEEKRRRLEEEQRVEEEKKKKMLEERRRREREYEEKKSILRQEREEQRSKEVIRLREHAHSPLIITCALKKGDCHGKQQAIAHVPKGKGTIAKESVDSNSKKQEDACLAQQLNKRENTHVQQLAMKKSTGIKLKPNQAILVELKMNEKNESLPKLKINENLSKNQCSEQPSDQEFNAENVDQKNELENSNLKESVNEQYPWQGLESDTQTEEHVEHVREEKVGQETEKLFGFNQEVSAEDSKQAQGVMEETREGLAEEIEIKEMTQQGGPSDENNSSPISMQKSLPSLTPDNPEPVERSVTLEEDQETDLKSERIEEIPEEGVLSCDAAVINADASVHTEGEADLQDSASGKLAPSEEAGSHSANNLLATEEVEDSPKSEIQEALEKGQQTKAEADGVLTCSVSQLTVLSSVEERRLAWVKTFKPWAEIFEQNQHKKIVKKRRLVKCPPNTMPPLDPSAILQYGPWKSLKQVPVITFQGLPGCSLSTLAECSNLQILSLRRCGLTSLQGLSHCTRLKYIDAQENHIEAISCENLENLSVVLLNNNLLTSIHGFDGCTNLQSLELSHNKITRISGLESLKYLQELTVDHNQLISTKGLCEAPTIVYLDCSHNHLTGIDGIGNCGLLQIIKLQGNYLREPPSLRNHVLLRELHLDDNSISSVEGLSSCWLPLLQYLSISQNSLATIVPLFHLVSLEKLDVSNNCLSDLTNVMCWFNACYSLRELCLTGNPVLQEINWRDSILKTLPALRVLNGDMLNSYANDRIEEHYHQDLRCLLALCQYQLQEFNLLPEKYITQKRDILTLHAVDRLSQYYKDLMKLSHECRRAHEQGDVNTTERSAAETNKNHPDFSNTDSALQNKTLHAQTNSCEADSPATSPNPLDTVFRPSTSHCEELRGRNQEKLMAHKSEQSRISSRSNSRASFIEMKMADSPMSNHHNAERSSPTKAAMVIQAQWRSYIAHRQINCSAEMHPTTTEPLQDPLINNQTTSNEERRKTNMDIQEQREKAALHIQAVWKGFILRKKLATARKAIKDEESGEEYEEIDLEDFEFDEDALEKDWPALDSTGFPSQTLPLSNQLPWPKNSRTLRHDETSPTIPVRPAQAWLCNEKENVMSSEYTQLSSRSESGILSWTPDSKTSRKNLLQSEKEEKISEEWGFKDISTAQQMLKRAKKMKSKKLRKKLEPSVRLALFKKAKNKVSVTKSSKKTQLRRDNYFEAHISSQDEEEEAVSKATAAKEKLERSQEYTYQWLHTQVGFPEATSSRNLKCNHFLPELDPDVLNGGRVQLVARLVSREDTDLDLFSMTSASALSVNKDKKSQTHRYSTGSSSKLWFPSELI</sequence>
<accession>Q0P5X1</accession>
<accession>Q3TYL6</accession>
<accession>Q9CUK8</accession>
<keyword id="KW-0025">Alternative splicing</keyword>
<keyword id="KW-0433">Leucine-rich repeat</keyword>
<keyword id="KW-1185">Reference proteome</keyword>
<keyword id="KW-0677">Repeat</keyword>
<reference key="1">
    <citation type="journal article" date="2009" name="PLoS Biol.">
        <title>Lineage-specific biology revealed by a finished genome assembly of the mouse.</title>
        <authorList>
            <person name="Church D.M."/>
            <person name="Goodstadt L."/>
            <person name="Hillier L.W."/>
            <person name="Zody M.C."/>
            <person name="Goldstein S."/>
            <person name="She X."/>
            <person name="Bult C.J."/>
            <person name="Agarwala R."/>
            <person name="Cherry J.L."/>
            <person name="DiCuccio M."/>
            <person name="Hlavina W."/>
            <person name="Kapustin Y."/>
            <person name="Meric P."/>
            <person name="Maglott D."/>
            <person name="Birtle Z."/>
            <person name="Marques A.C."/>
            <person name="Graves T."/>
            <person name="Zhou S."/>
            <person name="Teague B."/>
            <person name="Potamousis K."/>
            <person name="Churas C."/>
            <person name="Place M."/>
            <person name="Herschleb J."/>
            <person name="Runnheim R."/>
            <person name="Forrest D."/>
            <person name="Amos-Landgraf J."/>
            <person name="Schwartz D.C."/>
            <person name="Cheng Z."/>
            <person name="Lindblad-Toh K."/>
            <person name="Eichler E.E."/>
            <person name="Ponting C.P."/>
        </authorList>
    </citation>
    <scope>NUCLEOTIDE SEQUENCE [LARGE SCALE GENOMIC DNA]</scope>
    <source>
        <strain>C57BL/6J</strain>
    </source>
</reference>
<reference key="2">
    <citation type="journal article" date="2004" name="Genome Res.">
        <title>The status, quality, and expansion of the NIH full-length cDNA project: the Mammalian Gene Collection (MGC).</title>
        <authorList>
            <consortium name="The MGC Project Team"/>
        </authorList>
    </citation>
    <scope>NUCLEOTIDE SEQUENCE [LARGE SCALE MRNA] (ISOFORM 2)</scope>
    <source>
        <tissue>Olfactory epithelium</tissue>
    </source>
</reference>
<reference key="3">
    <citation type="journal article" date="2005" name="Science">
        <title>The transcriptional landscape of the mammalian genome.</title>
        <authorList>
            <person name="Carninci P."/>
            <person name="Kasukawa T."/>
            <person name="Katayama S."/>
            <person name="Gough J."/>
            <person name="Frith M.C."/>
            <person name="Maeda N."/>
            <person name="Oyama R."/>
            <person name="Ravasi T."/>
            <person name="Lenhard B."/>
            <person name="Wells C."/>
            <person name="Kodzius R."/>
            <person name="Shimokawa K."/>
            <person name="Bajic V.B."/>
            <person name="Brenner S.E."/>
            <person name="Batalov S."/>
            <person name="Forrest A.R."/>
            <person name="Zavolan M."/>
            <person name="Davis M.J."/>
            <person name="Wilming L.G."/>
            <person name="Aidinis V."/>
            <person name="Allen J.E."/>
            <person name="Ambesi-Impiombato A."/>
            <person name="Apweiler R."/>
            <person name="Aturaliya R.N."/>
            <person name="Bailey T.L."/>
            <person name="Bansal M."/>
            <person name="Baxter L."/>
            <person name="Beisel K.W."/>
            <person name="Bersano T."/>
            <person name="Bono H."/>
            <person name="Chalk A.M."/>
            <person name="Chiu K.P."/>
            <person name="Choudhary V."/>
            <person name="Christoffels A."/>
            <person name="Clutterbuck D.R."/>
            <person name="Crowe M.L."/>
            <person name="Dalla E."/>
            <person name="Dalrymple B.P."/>
            <person name="de Bono B."/>
            <person name="Della Gatta G."/>
            <person name="di Bernardo D."/>
            <person name="Down T."/>
            <person name="Engstrom P."/>
            <person name="Fagiolini M."/>
            <person name="Faulkner G."/>
            <person name="Fletcher C.F."/>
            <person name="Fukushima T."/>
            <person name="Furuno M."/>
            <person name="Futaki S."/>
            <person name="Gariboldi M."/>
            <person name="Georgii-Hemming P."/>
            <person name="Gingeras T.R."/>
            <person name="Gojobori T."/>
            <person name="Green R.E."/>
            <person name="Gustincich S."/>
            <person name="Harbers M."/>
            <person name="Hayashi Y."/>
            <person name="Hensch T.K."/>
            <person name="Hirokawa N."/>
            <person name="Hill D."/>
            <person name="Huminiecki L."/>
            <person name="Iacono M."/>
            <person name="Ikeo K."/>
            <person name="Iwama A."/>
            <person name="Ishikawa T."/>
            <person name="Jakt M."/>
            <person name="Kanapin A."/>
            <person name="Katoh M."/>
            <person name="Kawasawa Y."/>
            <person name="Kelso J."/>
            <person name="Kitamura H."/>
            <person name="Kitano H."/>
            <person name="Kollias G."/>
            <person name="Krishnan S.P."/>
            <person name="Kruger A."/>
            <person name="Kummerfeld S.K."/>
            <person name="Kurochkin I.V."/>
            <person name="Lareau L.F."/>
            <person name="Lazarevic D."/>
            <person name="Lipovich L."/>
            <person name="Liu J."/>
            <person name="Liuni S."/>
            <person name="McWilliam S."/>
            <person name="Madan Babu M."/>
            <person name="Madera M."/>
            <person name="Marchionni L."/>
            <person name="Matsuda H."/>
            <person name="Matsuzawa S."/>
            <person name="Miki H."/>
            <person name="Mignone F."/>
            <person name="Miyake S."/>
            <person name="Morris K."/>
            <person name="Mottagui-Tabar S."/>
            <person name="Mulder N."/>
            <person name="Nakano N."/>
            <person name="Nakauchi H."/>
            <person name="Ng P."/>
            <person name="Nilsson R."/>
            <person name="Nishiguchi S."/>
            <person name="Nishikawa S."/>
            <person name="Nori F."/>
            <person name="Ohara O."/>
            <person name="Okazaki Y."/>
            <person name="Orlando V."/>
            <person name="Pang K.C."/>
            <person name="Pavan W.J."/>
            <person name="Pavesi G."/>
            <person name="Pesole G."/>
            <person name="Petrovsky N."/>
            <person name="Piazza S."/>
            <person name="Reed J."/>
            <person name="Reid J.F."/>
            <person name="Ring B.Z."/>
            <person name="Ringwald M."/>
            <person name="Rost B."/>
            <person name="Ruan Y."/>
            <person name="Salzberg S.L."/>
            <person name="Sandelin A."/>
            <person name="Schneider C."/>
            <person name="Schoenbach C."/>
            <person name="Sekiguchi K."/>
            <person name="Semple C.A."/>
            <person name="Seno S."/>
            <person name="Sessa L."/>
            <person name="Sheng Y."/>
            <person name="Shibata Y."/>
            <person name="Shimada H."/>
            <person name="Shimada K."/>
            <person name="Silva D."/>
            <person name="Sinclair B."/>
            <person name="Sperling S."/>
            <person name="Stupka E."/>
            <person name="Sugiura K."/>
            <person name="Sultana R."/>
            <person name="Takenaka Y."/>
            <person name="Taki K."/>
            <person name="Tammoja K."/>
            <person name="Tan S.L."/>
            <person name="Tang S."/>
            <person name="Taylor M.S."/>
            <person name="Tegner J."/>
            <person name="Teichmann S.A."/>
            <person name="Ueda H.R."/>
            <person name="van Nimwegen E."/>
            <person name="Verardo R."/>
            <person name="Wei C.L."/>
            <person name="Yagi K."/>
            <person name="Yamanishi H."/>
            <person name="Zabarovsky E."/>
            <person name="Zhu S."/>
            <person name="Zimmer A."/>
            <person name="Hide W."/>
            <person name="Bult C."/>
            <person name="Grimmond S.M."/>
            <person name="Teasdale R.D."/>
            <person name="Liu E.T."/>
            <person name="Brusic V."/>
            <person name="Quackenbush J."/>
            <person name="Wahlestedt C."/>
            <person name="Mattick J.S."/>
            <person name="Hume D.A."/>
            <person name="Kai C."/>
            <person name="Sasaki D."/>
            <person name="Tomaru Y."/>
            <person name="Fukuda S."/>
            <person name="Kanamori-Katayama M."/>
            <person name="Suzuki M."/>
            <person name="Aoki J."/>
            <person name="Arakawa T."/>
            <person name="Iida J."/>
            <person name="Imamura K."/>
            <person name="Itoh M."/>
            <person name="Kato T."/>
            <person name="Kawaji H."/>
            <person name="Kawagashira N."/>
            <person name="Kawashima T."/>
            <person name="Kojima M."/>
            <person name="Kondo S."/>
            <person name="Konno H."/>
            <person name="Nakano K."/>
            <person name="Ninomiya N."/>
            <person name="Nishio T."/>
            <person name="Okada M."/>
            <person name="Plessy C."/>
            <person name="Shibata K."/>
            <person name="Shiraki T."/>
            <person name="Suzuki S."/>
            <person name="Tagami M."/>
            <person name="Waki K."/>
            <person name="Watahiki A."/>
            <person name="Okamura-Oho Y."/>
            <person name="Suzuki H."/>
            <person name="Kawai J."/>
            <person name="Hayashizaki Y."/>
        </authorList>
    </citation>
    <scope>NUCLEOTIDE SEQUENCE [LARGE SCALE MRNA] OF 1-520 (ISOFORM 1)</scope>
    <source>
        <strain>C57BL/6J</strain>
        <tissue>Testis</tissue>
        <tissue>Visual cortex</tissue>
    </source>
</reference>